<comment type="catalytic activity">
    <reaction>
        <text>an acyl phosphate + H2O = a carboxylate + phosphate + H(+)</text>
        <dbReference type="Rhea" id="RHEA:14965"/>
        <dbReference type="ChEBI" id="CHEBI:15377"/>
        <dbReference type="ChEBI" id="CHEBI:15378"/>
        <dbReference type="ChEBI" id="CHEBI:29067"/>
        <dbReference type="ChEBI" id="CHEBI:43474"/>
        <dbReference type="ChEBI" id="CHEBI:59918"/>
        <dbReference type="EC" id="3.6.1.7"/>
    </reaction>
</comment>
<comment type="similarity">
    <text evidence="2">Belongs to the acylphosphatase family.</text>
</comment>
<comment type="sequence caution" evidence="2">
    <conflict type="erroneous initiation">
        <sequence resource="EMBL-CDS" id="ABF80186"/>
    </conflict>
</comment>
<protein>
    <recommendedName>
        <fullName>Acylphosphatase</fullName>
        <ecNumber>3.6.1.7</ecNumber>
    </recommendedName>
    <alternativeName>
        <fullName>Acylphosphate phosphohydrolase</fullName>
    </alternativeName>
</protein>
<sequence>MSRNELDERIETYYVRVRGVVQGVGFRHATVREAHALKLRGWVANLEDGTVEAMIQGPGAQIDRMLAWLRHGPPAARVTEVTFEERRTEKRFERFQQQ</sequence>
<name>ACYP_BURO1</name>
<organism>
    <name type="scientific">Burkholderia orbicola (strain AU 1054)</name>
    <dbReference type="NCBI Taxonomy" id="331271"/>
    <lineage>
        <taxon>Bacteria</taxon>
        <taxon>Pseudomonadati</taxon>
        <taxon>Pseudomonadota</taxon>
        <taxon>Betaproteobacteria</taxon>
        <taxon>Burkholderiales</taxon>
        <taxon>Burkholderiaceae</taxon>
        <taxon>Burkholderia</taxon>
        <taxon>Burkholderia cepacia complex</taxon>
        <taxon>Burkholderia orbicola</taxon>
    </lineage>
</organism>
<dbReference type="EC" id="3.6.1.7"/>
<dbReference type="EMBL" id="CP000379">
    <property type="protein sequence ID" value="ABF80186.1"/>
    <property type="status" value="ALT_INIT"/>
    <property type="molecule type" value="Genomic_DNA"/>
</dbReference>
<dbReference type="SMR" id="Q1BJL9"/>
<dbReference type="HOGENOM" id="CLU_141932_1_2_4"/>
<dbReference type="GO" id="GO:0003998">
    <property type="term" value="F:acylphosphatase activity"/>
    <property type="evidence" value="ECO:0007669"/>
    <property type="project" value="UniProtKB-EC"/>
</dbReference>
<dbReference type="Gene3D" id="3.30.70.100">
    <property type="match status" value="1"/>
</dbReference>
<dbReference type="InterPro" id="IPR020456">
    <property type="entry name" value="Acylphosphatase"/>
</dbReference>
<dbReference type="InterPro" id="IPR001792">
    <property type="entry name" value="Acylphosphatase-like_dom"/>
</dbReference>
<dbReference type="InterPro" id="IPR036046">
    <property type="entry name" value="Acylphosphatase-like_dom_sf"/>
</dbReference>
<dbReference type="InterPro" id="IPR017968">
    <property type="entry name" value="Acylphosphatase_CS"/>
</dbReference>
<dbReference type="NCBIfam" id="NF010998">
    <property type="entry name" value="PRK14424.1"/>
    <property type="match status" value="1"/>
</dbReference>
<dbReference type="PANTHER" id="PTHR47268">
    <property type="entry name" value="ACYLPHOSPHATASE"/>
    <property type="match status" value="1"/>
</dbReference>
<dbReference type="PANTHER" id="PTHR47268:SF4">
    <property type="entry name" value="ACYLPHOSPHATASE"/>
    <property type="match status" value="1"/>
</dbReference>
<dbReference type="Pfam" id="PF00708">
    <property type="entry name" value="Acylphosphatase"/>
    <property type="match status" value="1"/>
</dbReference>
<dbReference type="PRINTS" id="PR00112">
    <property type="entry name" value="ACYLPHPHTASE"/>
</dbReference>
<dbReference type="SUPFAM" id="SSF54975">
    <property type="entry name" value="Acylphosphatase/BLUF domain-like"/>
    <property type="match status" value="1"/>
</dbReference>
<dbReference type="PROSITE" id="PS00150">
    <property type="entry name" value="ACYLPHOSPHATASE_1"/>
    <property type="match status" value="1"/>
</dbReference>
<dbReference type="PROSITE" id="PS00151">
    <property type="entry name" value="ACYLPHOSPHATASE_2"/>
    <property type="match status" value="1"/>
</dbReference>
<dbReference type="PROSITE" id="PS51160">
    <property type="entry name" value="ACYLPHOSPHATASE_3"/>
    <property type="match status" value="1"/>
</dbReference>
<reference key="1">
    <citation type="submission" date="2006-05" db="EMBL/GenBank/DDBJ databases">
        <title>Complete sequence of chromosome 2 of Burkholderia cenocepacia AU 1054.</title>
        <authorList>
            <consortium name="US DOE Joint Genome Institute"/>
            <person name="Copeland A."/>
            <person name="Lucas S."/>
            <person name="Lapidus A."/>
            <person name="Barry K."/>
            <person name="Detter J.C."/>
            <person name="Glavina del Rio T."/>
            <person name="Hammon N."/>
            <person name="Israni S."/>
            <person name="Dalin E."/>
            <person name="Tice H."/>
            <person name="Pitluck S."/>
            <person name="Chain P."/>
            <person name="Malfatti S."/>
            <person name="Shin M."/>
            <person name="Vergez L."/>
            <person name="Schmutz J."/>
            <person name="Larimer F."/>
            <person name="Land M."/>
            <person name="Hauser L."/>
            <person name="Kyrpides N."/>
            <person name="Lykidis A."/>
            <person name="LiPuma J.J."/>
            <person name="Konstantinidis K."/>
            <person name="Tiedje J.M."/>
            <person name="Richardson P."/>
        </authorList>
    </citation>
    <scope>NUCLEOTIDE SEQUENCE [LARGE SCALE GENOMIC DNA]</scope>
    <source>
        <strain>AU 1054</strain>
    </source>
</reference>
<accession>Q1BJL9</accession>
<gene>
    <name type="primary">acyP</name>
    <name type="ordered locus">Bcen_5312</name>
</gene>
<keyword id="KW-0378">Hydrolase</keyword>
<evidence type="ECO:0000255" key="1">
    <source>
        <dbReference type="PROSITE-ProRule" id="PRU00520"/>
    </source>
</evidence>
<evidence type="ECO:0000305" key="2"/>
<feature type="chain" id="PRO_0000326667" description="Acylphosphatase">
    <location>
        <begin position="1"/>
        <end position="98"/>
    </location>
</feature>
<feature type="domain" description="Acylphosphatase-like" evidence="1">
    <location>
        <begin position="12"/>
        <end position="98"/>
    </location>
</feature>
<feature type="active site" evidence="1">
    <location>
        <position position="27"/>
    </location>
</feature>
<feature type="active site" evidence="1">
    <location>
        <position position="45"/>
    </location>
</feature>
<proteinExistence type="inferred from homology"/>